<protein>
    <recommendedName>
        <fullName evidence="5">Probable peptidoglycan D,D-transpeptidase FtsI</fullName>
        <ecNumber evidence="1">3.4.16.4</ecNumber>
    </recommendedName>
    <alternativeName>
        <fullName>Penicillin-binding protein 3</fullName>
        <shortName>PBP-3</shortName>
    </alternativeName>
</protein>
<accession>B8H0A0</accession>
<keyword id="KW-0121">Carboxypeptidase</keyword>
<keyword id="KW-0131">Cell cycle</keyword>
<keyword id="KW-0132">Cell division</keyword>
<keyword id="KW-0997">Cell inner membrane</keyword>
<keyword id="KW-1003">Cell membrane</keyword>
<keyword id="KW-0133">Cell shape</keyword>
<keyword id="KW-0961">Cell wall biogenesis/degradation</keyword>
<keyword id="KW-0378">Hydrolase</keyword>
<keyword id="KW-0472">Membrane</keyword>
<keyword id="KW-0573">Peptidoglycan synthesis</keyword>
<keyword id="KW-0645">Protease</keyword>
<keyword id="KW-1185">Reference proteome</keyword>
<keyword id="KW-0717">Septation</keyword>
<keyword id="KW-0812">Transmembrane</keyword>
<keyword id="KW-1133">Transmembrane helix</keyword>
<proteinExistence type="evidence at protein level"/>
<comment type="function">
    <text evidence="1">Catalyzes cross-linking of the peptidoglycan cell wall at the division septum.</text>
</comment>
<comment type="catalytic activity">
    <reaction evidence="1">
        <text>Preferential cleavage: (Ac)2-L-Lys-D-Ala-|-D-Ala. Also transpeptidation of peptidyl-alanyl moieties that are N-acyl substituents of D-alanine.</text>
        <dbReference type="EC" id="3.4.16.4"/>
    </reaction>
</comment>
<comment type="pathway">
    <text evidence="1">Cell wall biogenesis; peptidoglycan biosynthesis.</text>
</comment>
<comment type="subunit">
    <text evidence="4">Interacts with FtsN and FtsW.</text>
</comment>
<comment type="subcellular location">
    <subcellularLocation>
        <location evidence="3">Cell inner membrane</location>
        <topology evidence="3">Single-pass membrane protein</topology>
    </subcellularLocation>
    <text>Localization varies during the cell cycle. At the beginning of the cell cycle, it accumulates at the new cell pole. Later during the cell cycle, polar accumulation disappears concomitantly with the re-localization to the FtsZ ring in a FtsZ-dependent manner. A portion of FtsI molecules is also diffusely dispersed around the membrane during both cell elongation and division.</text>
</comment>
<comment type="domain">
    <text evidence="3">The active site is important for FtsI localization.</text>
</comment>
<comment type="similarity">
    <text evidence="5">Belongs to the transpeptidase family.</text>
</comment>
<name>FTSI_CAUVN</name>
<gene>
    <name type="primary">ftsI</name>
    <name type="ordered locus">CCNA_02643</name>
</gene>
<evidence type="ECO:0000250" key="1">
    <source>
        <dbReference type="UniProtKB" id="P0AD68"/>
    </source>
</evidence>
<evidence type="ECO:0000255" key="2"/>
<evidence type="ECO:0000269" key="3">
    <source>
    </source>
</evidence>
<evidence type="ECO:0000269" key="4">
    <source>
    </source>
</evidence>
<evidence type="ECO:0000305" key="5"/>
<feature type="chain" id="PRO_0000420269" description="Probable peptidoglycan D,D-transpeptidase FtsI">
    <location>
        <begin position="1"/>
        <end position="589"/>
    </location>
</feature>
<feature type="transmembrane region" description="Helical" evidence="2">
    <location>
        <begin position="47"/>
        <end position="67"/>
    </location>
</feature>
<feature type="active site" description="Acyl-ester intermediate" evidence="1">
    <location>
        <position position="296"/>
    </location>
</feature>
<sequence>MSLSNLGPGGVHSPLWRWVVERVWRLEHAFERSRAAARPEDDTRIRIFLVMGFFGFCFVGVSLGAGWSALFSRAGQGGGYAQGVEGARGDVVDRNGKLLAVDLAHYALYVDPREVWDAKETRAALGRALPQVPAKRLDKAVFGDHRAFVLGGLTPDEKDAIFNLGLPGVTFEEQERRMYPLGPTAAHLIGFVDSGGKGLAGAERALDDPIRKAAGGEGGPAQLSIDVRVQAALEDELRKAAEEFTPKGAVGLVTNVHTGEILGMASWPDYDANKAGGATDDQRLNRAAASVYEMGSTFKAFTVAIGLDTGVATAASTFDAREPYKLGYRTIHDYHATKAVLNLVEVFQHSSNIGTAMLAERVGGQRLSQYFTNLGLTKPAKVELQESARPLTPRKWDQDTVASTSFGHGMNISPLALAQAMNALLNGGEMRPLTIRKLPPGVRPEGRRVLSEHTSAEMLKIMRANVVPGEGGSGGKADVPGLSVGGKTGTGEKYDPAIRRYNHQRQVSSFAATFPTDGPLEADRYFVLILLDEPKGNANSFGFSTGGWVAAPAAGRVIERIAPFLGVKRKTELVTIANSPKNAAPEAGL</sequence>
<reference key="1">
    <citation type="journal article" date="2010" name="J. Bacteriol.">
        <title>The genetic basis of laboratory adaptation in Caulobacter crescentus.</title>
        <authorList>
            <person name="Marks M.E."/>
            <person name="Castro-Rojas C.M."/>
            <person name="Teiling C."/>
            <person name="Du L."/>
            <person name="Kapatral V."/>
            <person name="Walunas T.L."/>
            <person name="Crosson S."/>
        </authorList>
    </citation>
    <scope>NUCLEOTIDE SEQUENCE [LARGE SCALE GENOMIC DNA]</scope>
    <source>
        <strain>NA1000 / CB15N</strain>
    </source>
</reference>
<reference key="2">
    <citation type="journal article" date="2008" name="Mol. Microbiol.">
        <title>Localization of PBP3 in Caulobacter crescentus is highly dynamic and largely relies on its functional transpeptidase domain.</title>
        <authorList>
            <person name="Costa T."/>
            <person name="Priyadarshini R."/>
            <person name="Jacobs-Wagner C."/>
        </authorList>
    </citation>
    <scope>SUBCELLULAR LOCATION</scope>
    <scope>DOMAIN</scope>
    <source>
        <strain>NA1000 / CB15N</strain>
    </source>
</reference>
<reference key="3">
    <citation type="journal article" date="2011" name="Genes Dev.">
        <title>A DNA damage checkpoint in Caulobacter crescentus inhibits cell division through a direct interaction with FtsW.</title>
        <authorList>
            <person name="Modell J.W."/>
            <person name="Hopkins A.C."/>
            <person name="Laub M.T."/>
        </authorList>
    </citation>
    <scope>INTERACTION WITH FTSN AND FTSW</scope>
    <source>
        <strain>NA1000 / CB15N</strain>
    </source>
</reference>
<dbReference type="EC" id="3.4.16.4" evidence="1"/>
<dbReference type="EMBL" id="CP001340">
    <property type="protein sequence ID" value="ACL96108.1"/>
    <property type="molecule type" value="Genomic_DNA"/>
</dbReference>
<dbReference type="RefSeq" id="WP_010920416.1">
    <property type="nucleotide sequence ID" value="NC_011916.1"/>
</dbReference>
<dbReference type="RefSeq" id="YP_002518016.1">
    <property type="nucleotide sequence ID" value="NC_011916.1"/>
</dbReference>
<dbReference type="SMR" id="B8H0A0"/>
<dbReference type="GeneID" id="7332745"/>
<dbReference type="KEGG" id="ccs:CCNA_02643"/>
<dbReference type="PATRIC" id="fig|565050.3.peg.2591"/>
<dbReference type="HOGENOM" id="CLU_009289_6_2_5"/>
<dbReference type="OrthoDB" id="9789078at2"/>
<dbReference type="PhylomeDB" id="B8H0A0"/>
<dbReference type="UniPathway" id="UPA00219"/>
<dbReference type="Proteomes" id="UP000001364">
    <property type="component" value="Chromosome"/>
</dbReference>
<dbReference type="GO" id="GO:0005886">
    <property type="term" value="C:plasma membrane"/>
    <property type="evidence" value="ECO:0007669"/>
    <property type="project" value="UniProtKB-SubCell"/>
</dbReference>
<dbReference type="GO" id="GO:0008658">
    <property type="term" value="F:penicillin binding"/>
    <property type="evidence" value="ECO:0007669"/>
    <property type="project" value="InterPro"/>
</dbReference>
<dbReference type="GO" id="GO:0009002">
    <property type="term" value="F:serine-type D-Ala-D-Ala carboxypeptidase activity"/>
    <property type="evidence" value="ECO:0007669"/>
    <property type="project" value="UniProtKB-EC"/>
</dbReference>
<dbReference type="GO" id="GO:0071555">
    <property type="term" value="P:cell wall organization"/>
    <property type="evidence" value="ECO:0007669"/>
    <property type="project" value="UniProtKB-KW"/>
</dbReference>
<dbReference type="GO" id="GO:0000917">
    <property type="term" value="P:division septum assembly"/>
    <property type="evidence" value="ECO:0007669"/>
    <property type="project" value="UniProtKB-KW"/>
</dbReference>
<dbReference type="GO" id="GO:0009252">
    <property type="term" value="P:peptidoglycan biosynthetic process"/>
    <property type="evidence" value="ECO:0007669"/>
    <property type="project" value="UniProtKB-UniPathway"/>
</dbReference>
<dbReference type="GO" id="GO:0006508">
    <property type="term" value="P:proteolysis"/>
    <property type="evidence" value="ECO:0007669"/>
    <property type="project" value="UniProtKB-KW"/>
</dbReference>
<dbReference type="GO" id="GO:0008360">
    <property type="term" value="P:regulation of cell shape"/>
    <property type="evidence" value="ECO:0007669"/>
    <property type="project" value="UniProtKB-KW"/>
</dbReference>
<dbReference type="Gene3D" id="3.30.450.330">
    <property type="match status" value="1"/>
</dbReference>
<dbReference type="Gene3D" id="3.40.710.10">
    <property type="entry name" value="DD-peptidase/beta-lactamase superfamily"/>
    <property type="match status" value="1"/>
</dbReference>
<dbReference type="Gene3D" id="3.90.1310.10">
    <property type="entry name" value="Penicillin-binding protein 2a (Domain 2)"/>
    <property type="match status" value="1"/>
</dbReference>
<dbReference type="InterPro" id="IPR050515">
    <property type="entry name" value="Bact_Transpept/Beta-Lactamase"/>
</dbReference>
<dbReference type="InterPro" id="IPR012338">
    <property type="entry name" value="Beta-lactam/transpept-like"/>
</dbReference>
<dbReference type="InterPro" id="IPR005311">
    <property type="entry name" value="PBP_dimer"/>
</dbReference>
<dbReference type="InterPro" id="IPR036138">
    <property type="entry name" value="PBP_dimer_sf"/>
</dbReference>
<dbReference type="InterPro" id="IPR001460">
    <property type="entry name" value="PCN-bd_Tpept"/>
</dbReference>
<dbReference type="PANTHER" id="PTHR30627">
    <property type="entry name" value="PEPTIDOGLYCAN D,D-TRANSPEPTIDASE"/>
    <property type="match status" value="1"/>
</dbReference>
<dbReference type="PANTHER" id="PTHR30627:SF1">
    <property type="entry name" value="PEPTIDOGLYCAN D,D-TRANSPEPTIDASE FTSI"/>
    <property type="match status" value="1"/>
</dbReference>
<dbReference type="Pfam" id="PF03717">
    <property type="entry name" value="PBP_dimer"/>
    <property type="match status" value="1"/>
</dbReference>
<dbReference type="Pfam" id="PF00905">
    <property type="entry name" value="Transpeptidase"/>
    <property type="match status" value="1"/>
</dbReference>
<dbReference type="SUPFAM" id="SSF56601">
    <property type="entry name" value="beta-lactamase/transpeptidase-like"/>
    <property type="match status" value="1"/>
</dbReference>
<dbReference type="SUPFAM" id="SSF56519">
    <property type="entry name" value="Penicillin binding protein dimerisation domain"/>
    <property type="match status" value="1"/>
</dbReference>
<dbReference type="PROSITE" id="PS00146">
    <property type="entry name" value="BETA_LACTAMASE_A"/>
    <property type="match status" value="1"/>
</dbReference>
<organism>
    <name type="scientific">Caulobacter vibrioides (strain NA1000 / CB15N)</name>
    <name type="common">Caulobacter crescentus</name>
    <dbReference type="NCBI Taxonomy" id="565050"/>
    <lineage>
        <taxon>Bacteria</taxon>
        <taxon>Pseudomonadati</taxon>
        <taxon>Pseudomonadota</taxon>
        <taxon>Alphaproteobacteria</taxon>
        <taxon>Caulobacterales</taxon>
        <taxon>Caulobacteraceae</taxon>
        <taxon>Caulobacter</taxon>
    </lineage>
</organism>